<keyword id="KW-0108">Calcium channel impairing toxin</keyword>
<keyword id="KW-0903">Direct protein sequencing</keyword>
<keyword id="KW-1015">Disulfide bond</keyword>
<keyword id="KW-0872">Ion channel impairing toxin</keyword>
<keyword id="KW-0960">Knottin</keyword>
<keyword id="KW-0528">Neurotoxin</keyword>
<keyword id="KW-0964">Secreted</keyword>
<keyword id="KW-0800">Toxin</keyword>
<keyword id="KW-1218">Voltage-gated calcium channel impairing toxin</keyword>
<feature type="peptide" id="PRO_0000044995" description="Omega-actinopoditoxin-Mb1a">
    <location>
        <begin position="1"/>
        <end position="39"/>
    </location>
</feature>
<feature type="site" description="Critical for insecticidal activity" evidence="1">
    <location>
        <position position="10"/>
    </location>
</feature>
<feature type="site" description="Critical for insecticidal activity" evidence="1">
    <location>
        <position position="29"/>
    </location>
</feature>
<feature type="site" description="Critical for insecticidal activity" evidence="1">
    <location>
        <position position="37"/>
    </location>
</feature>
<feature type="disulfide bond" evidence="1">
    <location>
        <begin position="4"/>
        <end position="19"/>
    </location>
</feature>
<feature type="disulfide bond" evidence="1">
    <location>
        <begin position="11"/>
        <end position="30"/>
    </location>
</feature>
<feature type="disulfide bond" evidence="1">
    <location>
        <begin position="18"/>
        <end position="38"/>
    </location>
</feature>
<name>TOM1A_MISBR</name>
<organism evidence="3">
    <name type="scientific">Missulena bradleyi</name>
    <name type="common">Eastern mouse spider</name>
    <dbReference type="NCBI Taxonomy" id="230234"/>
    <lineage>
        <taxon>Eukaryota</taxon>
        <taxon>Metazoa</taxon>
        <taxon>Ecdysozoa</taxon>
        <taxon>Arthropoda</taxon>
        <taxon>Chelicerata</taxon>
        <taxon>Arachnida</taxon>
        <taxon>Araneae</taxon>
        <taxon>Mygalomorphae</taxon>
        <taxon>Actinopodidae</taxon>
        <taxon>Missulena</taxon>
    </lineage>
</organism>
<protein>
    <recommendedName>
        <fullName>Omega-actinopoditoxin-Mb1a</fullName>
        <shortName>Omega-AOTX-Mb1a</shortName>
    </recommendedName>
    <alternativeName>
        <fullName>Omega-missulenatoxin-Mb1a</fullName>
        <shortName>Omega-MSTX-Mb1a</shortName>
    </alternativeName>
</protein>
<dbReference type="SMR" id="P83588"/>
<dbReference type="ArachnoServer" id="AS000184">
    <property type="toxin name" value="omega-actinopoditoxin-Mb1a"/>
</dbReference>
<dbReference type="GO" id="GO:0005576">
    <property type="term" value="C:extracellular region"/>
    <property type="evidence" value="ECO:0007669"/>
    <property type="project" value="UniProtKB-SubCell"/>
</dbReference>
<dbReference type="GO" id="GO:0019855">
    <property type="term" value="F:calcium channel inhibitor activity"/>
    <property type="evidence" value="ECO:0007669"/>
    <property type="project" value="InterPro"/>
</dbReference>
<dbReference type="GO" id="GO:0090729">
    <property type="term" value="F:toxin activity"/>
    <property type="evidence" value="ECO:0007669"/>
    <property type="project" value="UniProtKB-KW"/>
</dbReference>
<dbReference type="GO" id="GO:0006952">
    <property type="term" value="P:defense response"/>
    <property type="evidence" value="ECO:0007669"/>
    <property type="project" value="InterPro"/>
</dbReference>
<dbReference type="InterPro" id="IPR009415">
    <property type="entry name" value="Omega-atracotox"/>
</dbReference>
<dbReference type="InterPro" id="IPR018071">
    <property type="entry name" value="Omega-atracotox_CS"/>
</dbReference>
<dbReference type="Pfam" id="PF06357">
    <property type="entry name" value="Omega-toxin"/>
    <property type="match status" value="1"/>
</dbReference>
<dbReference type="PROSITE" id="PS60016">
    <property type="entry name" value="OMEGA_ACTX_1"/>
    <property type="match status" value="1"/>
</dbReference>
<evidence type="ECO:0000250" key="1"/>
<evidence type="ECO:0000269" key="2">
    <source ref="1"/>
</evidence>
<evidence type="ECO:0000305" key="3"/>
<proteinExistence type="evidence at protein level"/>
<reference evidence="3" key="1">
    <citation type="submission" date="2003-05" db="UniProtKB">
        <authorList>
            <person name="Chong Y."/>
            <person name="Khalife A.A."/>
            <person name="Hains P.G."/>
            <person name="Broady K.R."/>
            <person name="Nicholson G.M."/>
        </authorList>
    </citation>
    <scope>PROTEIN SEQUENCE</scope>
    <scope>SUBCELLULAR LOCATION</scope>
    <scope>TISSUE SPECIFICITY</scope>
    <scope>MASS SPECTROMETRY</scope>
    <source>
        <tissue evidence="3">Venom</tissue>
    </source>
</reference>
<accession>P83588</accession>
<sequence>SPVCTPSGQPCQPNTQPCCNNAEEEQTINCNGNTVYRCA</sequence>
<comment type="function">
    <text evidence="1">Potent inhibitor of insect, but not mammalian, voltage-gated calcium channels (Cav).</text>
</comment>
<comment type="subcellular location">
    <subcellularLocation>
        <location evidence="2 3">Secreted</location>
    </subcellularLocation>
</comment>
<comment type="tissue specificity">
    <text evidence="2 3">Expressed by the venom gland.</text>
</comment>
<comment type="domain">
    <text evidence="1">The presence of a 'disulfide through disulfide knot' structurally defines this protein as a knottin.</text>
</comment>
<comment type="PTM">
    <text evidence="3">Contains 3 disulfide bonds.</text>
</comment>
<comment type="mass spectrometry"/>
<comment type="similarity">
    <text>Belongs to the neurotoxin 08 (Shiva) family. 02 (omega/kappa toxin) subfamily.</text>
</comment>